<organismHost>
    <name type="scientific">Enterococcus faecalis</name>
    <name type="common">Streptococcus faecalis</name>
    <dbReference type="NCBI Taxonomy" id="1351"/>
</organismHost>
<comment type="subcellular location">
    <subcellularLocation>
        <location evidence="1 3">Virion</location>
    </subcellularLocation>
</comment>
<organism>
    <name type="scientific">Enterococcus phage phiEF24C</name>
    <name type="common">Enterococcus bacteriophage phi-EF24C</name>
    <dbReference type="NCBI Taxonomy" id="442493"/>
    <lineage>
        <taxon>Viruses</taxon>
        <taxon>Duplodnaviria</taxon>
        <taxon>Heunggongvirae</taxon>
        <taxon>Uroviricota</taxon>
        <taxon>Caudoviricetes</taxon>
        <taxon>Herelleviridae</taxon>
        <taxon>Brockvirinae</taxon>
        <taxon>Kochikohdavirus</taxon>
        <taxon>Kochikohdavirus EF24C</taxon>
    </lineage>
</organism>
<dbReference type="EMBL" id="AP009390">
    <property type="protein sequence ID" value="BAF81337.1"/>
    <property type="molecule type" value="Genomic_DNA"/>
</dbReference>
<dbReference type="RefSeq" id="YP_001504178.1">
    <property type="nucleotide sequence ID" value="NC_009904.1"/>
</dbReference>
<dbReference type="GeneID" id="5666415"/>
<dbReference type="KEGG" id="vg:5666415"/>
<dbReference type="OrthoDB" id="23800at10239"/>
<dbReference type="Proteomes" id="UP000001151">
    <property type="component" value="Genome"/>
</dbReference>
<dbReference type="GO" id="GO:0044423">
    <property type="term" value="C:virion component"/>
    <property type="evidence" value="ECO:0007669"/>
    <property type="project" value="UniProtKB-KW"/>
</dbReference>
<evidence type="ECO:0000269" key="1">
    <source>
    </source>
</evidence>
<evidence type="ECO:0000303" key="2">
    <source>
    </source>
</evidence>
<evidence type="ECO:0000305" key="3"/>
<evidence type="ECO:0000312" key="4">
    <source>
        <dbReference type="EMBL" id="BAF81337.1"/>
    </source>
</evidence>
<sequence length="147" mass="16622">MAKEILNIEDLLKPETLEVAIDGKYLIVPTLSDGFTGTVAGGYAYAVTKKGTDYTVNELIYNQKDNTFKPSDEPIIITDDNEIFFITRTLEDPYNYPVVATEKLKTKDVKEKQVLQAFLAFADDRFKLGVYNVFLADEPFVYGDKTE</sequence>
<name>VPN4_BPPHE</name>
<accession>P85228</accession>
<accession>A8E2C1</accession>
<feature type="initiator methionine" description="Removed" evidence="1">
    <location>
        <position position="1"/>
    </location>
</feature>
<feature type="chain" id="PRO_0000302098" description="Virion protein 4" evidence="1">
    <location>
        <begin position="2"/>
        <end position="147"/>
    </location>
</feature>
<keyword id="KW-0903">Direct protein sequencing</keyword>
<keyword id="KW-1185">Reference proteome</keyword>
<keyword id="KW-0946">Virion</keyword>
<reference evidence="4" key="1">
    <citation type="journal article" date="2008" name="Appl. Environ. Microbiol.">
        <title>In silico and in vivo evaluation of bacteriophage phiEF24C, a candidate for treatment of Enterococcus faecalis infections.</title>
        <authorList>
            <person name="Uchiyama J."/>
            <person name="Rashel M."/>
            <person name="Takemura I."/>
            <person name="Wakiguchi H."/>
            <person name="Matsuzaki S."/>
        </authorList>
    </citation>
    <scope>NUCLEOTIDE SEQUENCE [GENOMIC DNA]</scope>
</reference>
<reference evidence="3" key="2">
    <citation type="journal article" date="2008" name="FEMS Microbiol. Lett.">
        <title>Isolation and characterization of a novel Enterococcus faecalis bacteriophage phiEF24C as a therapeutic candidate.</title>
        <authorList>
            <person name="Uchiyama J."/>
            <person name="Rashel M."/>
            <person name="Maeda Y."/>
            <person name="Takemura I."/>
            <person name="Sugihara S."/>
            <person name="Akechi K."/>
            <person name="Muraoka A."/>
            <person name="Wakiguchi H."/>
            <person name="Matsuzaki S."/>
        </authorList>
    </citation>
    <scope>PROTEIN SEQUENCE OF 2-11</scope>
</reference>
<proteinExistence type="evidence at protein level"/>
<protein>
    <recommendedName>
        <fullName evidence="2">Virion protein 4</fullName>
    </recommendedName>
</protein>